<evidence type="ECO:0000255" key="1">
    <source>
        <dbReference type="HAMAP-Rule" id="MF_00121"/>
    </source>
</evidence>
<reference key="1">
    <citation type="journal article" date="2008" name="Mol. Biol. Evol.">
        <title>Genome evolution of Wolbachia strain wPip from the Culex pipiens group.</title>
        <authorList>
            <person name="Klasson L."/>
            <person name="Walker T."/>
            <person name="Sebaihia M."/>
            <person name="Sanders M.J."/>
            <person name="Quail M.A."/>
            <person name="Lord A."/>
            <person name="Sanders S."/>
            <person name="Earl J."/>
            <person name="O'Neill S.L."/>
            <person name="Thomson N."/>
            <person name="Sinkins S.P."/>
            <person name="Parkhill J."/>
        </authorList>
    </citation>
    <scope>NUCLEOTIDE SEQUENCE [LARGE SCALE GENOMIC DNA]</scope>
    <source>
        <strain>wPip</strain>
    </source>
</reference>
<dbReference type="EC" id="6.3.5.-" evidence="1"/>
<dbReference type="EMBL" id="AM999887">
    <property type="protein sequence ID" value="CAQ54196.1"/>
    <property type="molecule type" value="Genomic_DNA"/>
</dbReference>
<dbReference type="RefSeq" id="WP_007302757.1">
    <property type="nucleotide sequence ID" value="NC_010981.1"/>
</dbReference>
<dbReference type="SMR" id="B3CN64"/>
<dbReference type="KEGG" id="wpi:WP0087"/>
<dbReference type="eggNOG" id="COG0064">
    <property type="taxonomic scope" value="Bacteria"/>
</dbReference>
<dbReference type="HOGENOM" id="CLU_019240_0_0_5"/>
<dbReference type="Proteomes" id="UP000008814">
    <property type="component" value="Chromosome"/>
</dbReference>
<dbReference type="GO" id="GO:0050566">
    <property type="term" value="F:asparaginyl-tRNA synthase (glutamine-hydrolyzing) activity"/>
    <property type="evidence" value="ECO:0007669"/>
    <property type="project" value="RHEA"/>
</dbReference>
<dbReference type="GO" id="GO:0005524">
    <property type="term" value="F:ATP binding"/>
    <property type="evidence" value="ECO:0007669"/>
    <property type="project" value="UniProtKB-KW"/>
</dbReference>
<dbReference type="GO" id="GO:0050567">
    <property type="term" value="F:glutaminyl-tRNA synthase (glutamine-hydrolyzing) activity"/>
    <property type="evidence" value="ECO:0007669"/>
    <property type="project" value="UniProtKB-UniRule"/>
</dbReference>
<dbReference type="GO" id="GO:0070681">
    <property type="term" value="P:glutaminyl-tRNAGln biosynthesis via transamidation"/>
    <property type="evidence" value="ECO:0007669"/>
    <property type="project" value="TreeGrafter"/>
</dbReference>
<dbReference type="GO" id="GO:0006412">
    <property type="term" value="P:translation"/>
    <property type="evidence" value="ECO:0007669"/>
    <property type="project" value="UniProtKB-UniRule"/>
</dbReference>
<dbReference type="FunFam" id="1.10.10.410:FF:000001">
    <property type="entry name" value="Aspartyl/glutamyl-tRNA(Asn/Gln) amidotransferase subunit B"/>
    <property type="match status" value="1"/>
</dbReference>
<dbReference type="FunFam" id="1.10.150.380:FF:000001">
    <property type="entry name" value="Aspartyl/glutamyl-tRNA(Asn/Gln) amidotransferase subunit B"/>
    <property type="match status" value="1"/>
</dbReference>
<dbReference type="Gene3D" id="1.10.10.410">
    <property type="match status" value="1"/>
</dbReference>
<dbReference type="Gene3D" id="1.10.150.380">
    <property type="entry name" value="GatB domain, N-terminal subdomain"/>
    <property type="match status" value="1"/>
</dbReference>
<dbReference type="HAMAP" id="MF_00121">
    <property type="entry name" value="GatB"/>
    <property type="match status" value="1"/>
</dbReference>
<dbReference type="InterPro" id="IPR017959">
    <property type="entry name" value="Asn/Gln-tRNA_amidoTrfase_suB/E"/>
</dbReference>
<dbReference type="InterPro" id="IPR006075">
    <property type="entry name" value="Asn/Gln-tRNA_Trfase_suB/E_cat"/>
</dbReference>
<dbReference type="InterPro" id="IPR018027">
    <property type="entry name" value="Asn/Gln_amidotransferase"/>
</dbReference>
<dbReference type="InterPro" id="IPR003789">
    <property type="entry name" value="Asn/Gln_tRNA_amidoTrase-B-like"/>
</dbReference>
<dbReference type="InterPro" id="IPR004413">
    <property type="entry name" value="GatB"/>
</dbReference>
<dbReference type="InterPro" id="IPR042114">
    <property type="entry name" value="GatB_C_1"/>
</dbReference>
<dbReference type="InterPro" id="IPR023168">
    <property type="entry name" value="GatB_Yqey_C_2"/>
</dbReference>
<dbReference type="InterPro" id="IPR017958">
    <property type="entry name" value="Gln-tRNA_amidoTrfase_suB_CS"/>
</dbReference>
<dbReference type="InterPro" id="IPR014746">
    <property type="entry name" value="Gln_synth/guanido_kin_cat_dom"/>
</dbReference>
<dbReference type="NCBIfam" id="TIGR00133">
    <property type="entry name" value="gatB"/>
    <property type="match status" value="1"/>
</dbReference>
<dbReference type="NCBIfam" id="NF004012">
    <property type="entry name" value="PRK05477.1-2"/>
    <property type="match status" value="1"/>
</dbReference>
<dbReference type="NCBIfam" id="NF004014">
    <property type="entry name" value="PRK05477.1-4"/>
    <property type="match status" value="1"/>
</dbReference>
<dbReference type="NCBIfam" id="NF004015">
    <property type="entry name" value="PRK05477.1-5"/>
    <property type="match status" value="1"/>
</dbReference>
<dbReference type="PANTHER" id="PTHR11659">
    <property type="entry name" value="GLUTAMYL-TRNA GLN AMIDOTRANSFERASE SUBUNIT B MITOCHONDRIAL AND PROKARYOTIC PET112-RELATED"/>
    <property type="match status" value="1"/>
</dbReference>
<dbReference type="PANTHER" id="PTHR11659:SF0">
    <property type="entry name" value="GLUTAMYL-TRNA(GLN) AMIDOTRANSFERASE SUBUNIT B, MITOCHONDRIAL"/>
    <property type="match status" value="1"/>
</dbReference>
<dbReference type="Pfam" id="PF02934">
    <property type="entry name" value="GatB_N"/>
    <property type="match status" value="1"/>
</dbReference>
<dbReference type="Pfam" id="PF02637">
    <property type="entry name" value="GatB_Yqey"/>
    <property type="match status" value="1"/>
</dbReference>
<dbReference type="SMART" id="SM00845">
    <property type="entry name" value="GatB_Yqey"/>
    <property type="match status" value="1"/>
</dbReference>
<dbReference type="SUPFAM" id="SSF89095">
    <property type="entry name" value="GatB/YqeY motif"/>
    <property type="match status" value="1"/>
</dbReference>
<dbReference type="SUPFAM" id="SSF55931">
    <property type="entry name" value="Glutamine synthetase/guanido kinase"/>
    <property type="match status" value="1"/>
</dbReference>
<dbReference type="PROSITE" id="PS01234">
    <property type="entry name" value="GATB"/>
    <property type="match status" value="1"/>
</dbReference>
<organism>
    <name type="scientific">Wolbachia pipientis subsp. Culex pipiens (strain wPip)</name>
    <dbReference type="NCBI Taxonomy" id="570417"/>
    <lineage>
        <taxon>Bacteria</taxon>
        <taxon>Pseudomonadati</taxon>
        <taxon>Pseudomonadota</taxon>
        <taxon>Alphaproteobacteria</taxon>
        <taxon>Rickettsiales</taxon>
        <taxon>Anaplasmataceae</taxon>
        <taxon>Wolbachieae</taxon>
        <taxon>Wolbachia</taxon>
    </lineage>
</organism>
<proteinExistence type="inferred from homology"/>
<name>GATB_WOLPP</name>
<gene>
    <name evidence="1" type="primary">gatB</name>
    <name type="ordered locus">WP0087</name>
</gene>
<keyword id="KW-0067">ATP-binding</keyword>
<keyword id="KW-0436">Ligase</keyword>
<keyword id="KW-0547">Nucleotide-binding</keyword>
<keyword id="KW-0648">Protein biosynthesis</keyword>
<comment type="function">
    <text evidence="1">Allows the formation of correctly charged Asn-tRNA(Asn) or Gln-tRNA(Gln) through the transamidation of misacylated Asp-tRNA(Asn) or Glu-tRNA(Gln) in organisms which lack either or both of asparaginyl-tRNA or glutaminyl-tRNA synthetases. The reaction takes place in the presence of glutamine and ATP through an activated phospho-Asp-tRNA(Asn) or phospho-Glu-tRNA(Gln).</text>
</comment>
<comment type="catalytic activity">
    <reaction evidence="1">
        <text>L-glutamyl-tRNA(Gln) + L-glutamine + ATP + H2O = L-glutaminyl-tRNA(Gln) + L-glutamate + ADP + phosphate + H(+)</text>
        <dbReference type="Rhea" id="RHEA:17521"/>
        <dbReference type="Rhea" id="RHEA-COMP:9681"/>
        <dbReference type="Rhea" id="RHEA-COMP:9684"/>
        <dbReference type="ChEBI" id="CHEBI:15377"/>
        <dbReference type="ChEBI" id="CHEBI:15378"/>
        <dbReference type="ChEBI" id="CHEBI:29985"/>
        <dbReference type="ChEBI" id="CHEBI:30616"/>
        <dbReference type="ChEBI" id="CHEBI:43474"/>
        <dbReference type="ChEBI" id="CHEBI:58359"/>
        <dbReference type="ChEBI" id="CHEBI:78520"/>
        <dbReference type="ChEBI" id="CHEBI:78521"/>
        <dbReference type="ChEBI" id="CHEBI:456216"/>
    </reaction>
</comment>
<comment type="catalytic activity">
    <reaction evidence="1">
        <text>L-aspartyl-tRNA(Asn) + L-glutamine + ATP + H2O = L-asparaginyl-tRNA(Asn) + L-glutamate + ADP + phosphate + 2 H(+)</text>
        <dbReference type="Rhea" id="RHEA:14513"/>
        <dbReference type="Rhea" id="RHEA-COMP:9674"/>
        <dbReference type="Rhea" id="RHEA-COMP:9677"/>
        <dbReference type="ChEBI" id="CHEBI:15377"/>
        <dbReference type="ChEBI" id="CHEBI:15378"/>
        <dbReference type="ChEBI" id="CHEBI:29985"/>
        <dbReference type="ChEBI" id="CHEBI:30616"/>
        <dbReference type="ChEBI" id="CHEBI:43474"/>
        <dbReference type="ChEBI" id="CHEBI:58359"/>
        <dbReference type="ChEBI" id="CHEBI:78515"/>
        <dbReference type="ChEBI" id="CHEBI:78516"/>
        <dbReference type="ChEBI" id="CHEBI:456216"/>
    </reaction>
</comment>
<comment type="subunit">
    <text evidence="1">Heterotrimer of A, B and C subunits.</text>
</comment>
<comment type="similarity">
    <text evidence="1">Belongs to the GatB/GatE family. GatB subfamily.</text>
</comment>
<accession>B3CN64</accession>
<sequence>MTKENWETVIGLEVHAQVSSKTKLFSSSLTEFGTEHNTQVSLVDAAMPGTLPILNYFCIEQAICTGLAISAEINKCSYFDRKNYFYPDLPQGYQITQFFEPIVKNGKVFINNNEKEIRIARIHLEQDAGKSIHEESKTYVDLNRAGVALMEIVSEPDLRSSAEAAEFMKKLRQILRYIGSCDGDMEKGSLRCDANVSVRPNGSSAFGTRCEIKNLNSIRYIVQAIDYEAQRQIKILESGGEISQDTLLFDVTLGKTKVMRSKEDSSDYRYFPEPDLLPVEISQDKIDSIKSSLPELPDQKKLRYINELGINEYDADVITSDKATADYFEELIKKHDSKIAVTWLTVELFGRLNKANIDIVSSPIKADALSELLDFIVDGTISAKLGKQVFDIMFETGKPASLIIEEQDLKQITDRDQISEIIDTIVNNNQDKVQEYKSGKTKLYGFFVGEVMKSTKGKASPDVVNLVLSERLG</sequence>
<protein>
    <recommendedName>
        <fullName evidence="1">Aspartyl/glutamyl-tRNA(Asn/Gln) amidotransferase subunit B</fullName>
        <shortName evidence="1">Asp/Glu-ADT subunit B</shortName>
        <ecNumber evidence="1">6.3.5.-</ecNumber>
    </recommendedName>
</protein>
<feature type="chain" id="PRO_1000095255" description="Aspartyl/glutamyl-tRNA(Asn/Gln) amidotransferase subunit B">
    <location>
        <begin position="1"/>
        <end position="473"/>
    </location>
</feature>